<accession>A0B8S9</accession>
<organism>
    <name type="scientific">Methanothrix thermoacetophila (strain DSM 6194 / JCM 14653 / NBRC 101360 / PT)</name>
    <name type="common">Methanosaeta thermophila</name>
    <dbReference type="NCBI Taxonomy" id="349307"/>
    <lineage>
        <taxon>Archaea</taxon>
        <taxon>Methanobacteriati</taxon>
        <taxon>Methanobacteriota</taxon>
        <taxon>Stenosarchaea group</taxon>
        <taxon>Methanomicrobia</taxon>
        <taxon>Methanotrichales</taxon>
        <taxon>Methanotrichaceae</taxon>
        <taxon>Methanothrix</taxon>
    </lineage>
</organism>
<evidence type="ECO:0000255" key="1">
    <source>
        <dbReference type="HAMAP-Rule" id="MF_00777"/>
    </source>
</evidence>
<evidence type="ECO:0000305" key="2"/>
<feature type="chain" id="PRO_1000046817" description="Small ribosomal subunit protein eS31">
    <location>
        <begin position="1"/>
        <end position="49"/>
    </location>
</feature>
<feature type="zinc finger region" description="C4-type" evidence="1">
    <location>
        <begin position="21"/>
        <end position="42"/>
    </location>
</feature>
<feature type="binding site" evidence="1">
    <location>
        <position position="21"/>
    </location>
    <ligand>
        <name>Zn(2+)</name>
        <dbReference type="ChEBI" id="CHEBI:29105"/>
    </ligand>
</feature>
<feature type="binding site" evidence="1">
    <location>
        <position position="24"/>
    </location>
    <ligand>
        <name>Zn(2+)</name>
        <dbReference type="ChEBI" id="CHEBI:29105"/>
    </ligand>
</feature>
<feature type="binding site" evidence="1">
    <location>
        <position position="39"/>
    </location>
    <ligand>
        <name>Zn(2+)</name>
        <dbReference type="ChEBI" id="CHEBI:29105"/>
    </ligand>
</feature>
<feature type="binding site" evidence="1">
    <location>
        <position position="42"/>
    </location>
    <ligand>
        <name>Zn(2+)</name>
        <dbReference type="ChEBI" id="CHEBI:29105"/>
    </ligand>
</feature>
<name>RS27A_METTP</name>
<reference key="1">
    <citation type="submission" date="2006-10" db="EMBL/GenBank/DDBJ databases">
        <title>Complete sequence of Methanosaeta thermophila PT.</title>
        <authorList>
            <consortium name="US DOE Joint Genome Institute"/>
            <person name="Copeland A."/>
            <person name="Lucas S."/>
            <person name="Lapidus A."/>
            <person name="Barry K."/>
            <person name="Detter J.C."/>
            <person name="Glavina del Rio T."/>
            <person name="Hammon N."/>
            <person name="Israni S."/>
            <person name="Pitluck S."/>
            <person name="Chain P."/>
            <person name="Malfatti S."/>
            <person name="Shin M."/>
            <person name="Vergez L."/>
            <person name="Schmutz J."/>
            <person name="Larimer F."/>
            <person name="Land M."/>
            <person name="Hauser L."/>
            <person name="Kyrpides N."/>
            <person name="Kim E."/>
            <person name="Smith K.S."/>
            <person name="Ingram-Smith C."/>
            <person name="Richardson P."/>
        </authorList>
    </citation>
    <scope>NUCLEOTIDE SEQUENCE [LARGE SCALE GENOMIC DNA]</scope>
    <source>
        <strain>DSM 6194 / JCM 14653 / NBRC 101360 / PT</strain>
    </source>
</reference>
<dbReference type="EMBL" id="CP000477">
    <property type="protein sequence ID" value="ABK15103.1"/>
    <property type="molecule type" value="Genomic_DNA"/>
</dbReference>
<dbReference type="RefSeq" id="WP_011696495.1">
    <property type="nucleotide sequence ID" value="NC_008553.1"/>
</dbReference>
<dbReference type="SMR" id="A0B8S9"/>
<dbReference type="STRING" id="349307.Mthe_1325"/>
<dbReference type="GeneID" id="4462132"/>
<dbReference type="KEGG" id="mtp:Mthe_1325"/>
<dbReference type="HOGENOM" id="CLU_179743_2_0_2"/>
<dbReference type="OrthoDB" id="25142at2157"/>
<dbReference type="Proteomes" id="UP000000674">
    <property type="component" value="Chromosome"/>
</dbReference>
<dbReference type="GO" id="GO:1990904">
    <property type="term" value="C:ribonucleoprotein complex"/>
    <property type="evidence" value="ECO:0007669"/>
    <property type="project" value="UniProtKB-KW"/>
</dbReference>
<dbReference type="GO" id="GO:0005840">
    <property type="term" value="C:ribosome"/>
    <property type="evidence" value="ECO:0007669"/>
    <property type="project" value="UniProtKB-KW"/>
</dbReference>
<dbReference type="GO" id="GO:0003735">
    <property type="term" value="F:structural constituent of ribosome"/>
    <property type="evidence" value="ECO:0007669"/>
    <property type="project" value="InterPro"/>
</dbReference>
<dbReference type="GO" id="GO:0008270">
    <property type="term" value="F:zinc ion binding"/>
    <property type="evidence" value="ECO:0007669"/>
    <property type="project" value="UniProtKB-UniRule"/>
</dbReference>
<dbReference type="GO" id="GO:0006412">
    <property type="term" value="P:translation"/>
    <property type="evidence" value="ECO:0007669"/>
    <property type="project" value="UniProtKB-UniRule"/>
</dbReference>
<dbReference type="Gene3D" id="6.20.50.180">
    <property type="match status" value="1"/>
</dbReference>
<dbReference type="HAMAP" id="MF_00777">
    <property type="entry name" value="Ribosomal_eS31"/>
    <property type="match status" value="1"/>
</dbReference>
<dbReference type="InterPro" id="IPR002906">
    <property type="entry name" value="Ribosomal_eS31"/>
</dbReference>
<dbReference type="InterPro" id="IPR022845">
    <property type="entry name" value="Ribosomal_eS31_arc"/>
</dbReference>
<dbReference type="InterPro" id="IPR011332">
    <property type="entry name" value="Ribosomal_zn-bd"/>
</dbReference>
<dbReference type="NCBIfam" id="NF001669">
    <property type="entry name" value="PRK00432.1"/>
    <property type="match status" value="1"/>
</dbReference>
<dbReference type="Pfam" id="PF01599">
    <property type="entry name" value="Ribosomal_S27"/>
    <property type="match status" value="1"/>
</dbReference>
<dbReference type="SMART" id="SM01402">
    <property type="entry name" value="Ribosomal_S27"/>
    <property type="match status" value="1"/>
</dbReference>
<dbReference type="SUPFAM" id="SSF57829">
    <property type="entry name" value="Zn-binding ribosomal proteins"/>
    <property type="match status" value="1"/>
</dbReference>
<proteinExistence type="inferred from homology"/>
<sequence length="49" mass="5611">MAVHKYYQLSGETIKARKPICPRCGNGVFLAEHEDRMSCGRCGYTEFKK</sequence>
<comment type="cofactor">
    <cofactor evidence="1">
        <name>Zn(2+)</name>
        <dbReference type="ChEBI" id="CHEBI:29105"/>
    </cofactor>
    <text evidence="1">Binds 1 zinc ion per subunit.</text>
</comment>
<comment type="subunit">
    <text evidence="1">Part of the 30S ribosomal subunit.</text>
</comment>
<comment type="similarity">
    <text evidence="1">Belongs to the eukaryotic ribosomal protein eS31 family.</text>
</comment>
<protein>
    <recommendedName>
        <fullName evidence="1">Small ribosomal subunit protein eS31</fullName>
    </recommendedName>
    <alternativeName>
        <fullName evidence="2">30S ribosomal protein S27ae</fullName>
    </alternativeName>
</protein>
<keyword id="KW-0479">Metal-binding</keyword>
<keyword id="KW-1185">Reference proteome</keyword>
<keyword id="KW-0687">Ribonucleoprotein</keyword>
<keyword id="KW-0689">Ribosomal protein</keyword>
<keyword id="KW-0862">Zinc</keyword>
<keyword id="KW-0863">Zinc-finger</keyword>
<gene>
    <name evidence="1" type="primary">rps27ae</name>
    <name type="ordered locus">Mthe_1325</name>
</gene>